<protein>
    <recommendedName>
        <fullName evidence="1">UPF0173 metal-dependent hydrolase Ta0764</fullName>
    </recommendedName>
</protein>
<sequence length="224" mass="24564">MENLKIIWHGHACFSLIGKKHVLVDPFLTDNPVAKVKPEELKPDLILVTHGHSDHCEDASKISKNTHAPVVAAFELSEILKEEGTETIDINPGGTIEYEGIRVKATIATHSSSYNGRYAGNPMGFVIDMGRKIYHAGDTGYFKDMEAIGAMDRPDIALLPIGGHYTMDVDGAFEAVKAIKPAIAIPMHYNTFDLIRADPERFKALAGTVGTYVIIPEIEKPIEI</sequence>
<dbReference type="EMBL" id="AL445065">
    <property type="protein sequence ID" value="CAC11897.1"/>
    <property type="status" value="ALT_INIT"/>
    <property type="molecule type" value="Genomic_DNA"/>
</dbReference>
<dbReference type="RefSeq" id="WP_010901179.1">
    <property type="nucleotide sequence ID" value="NC_002578.1"/>
</dbReference>
<dbReference type="SMR" id="Q9HK42"/>
<dbReference type="FunCoup" id="Q9HK42">
    <property type="interactions" value="8"/>
</dbReference>
<dbReference type="STRING" id="273075.gene:9571979"/>
<dbReference type="PaxDb" id="273075-Ta0764m"/>
<dbReference type="EnsemblBacteria" id="CAC11897">
    <property type="protein sequence ID" value="CAC11897"/>
    <property type="gene ID" value="CAC11897"/>
</dbReference>
<dbReference type="KEGG" id="tac:Ta0764"/>
<dbReference type="eggNOG" id="arCOG00497">
    <property type="taxonomic scope" value="Archaea"/>
</dbReference>
<dbReference type="HOGENOM" id="CLU_070010_4_0_2"/>
<dbReference type="InParanoid" id="Q9HK42"/>
<dbReference type="OrthoDB" id="28313at2157"/>
<dbReference type="Proteomes" id="UP000001024">
    <property type="component" value="Chromosome"/>
</dbReference>
<dbReference type="GO" id="GO:0016787">
    <property type="term" value="F:hydrolase activity"/>
    <property type="evidence" value="ECO:0007669"/>
    <property type="project" value="UniProtKB-UniRule"/>
</dbReference>
<dbReference type="Gene3D" id="3.60.15.10">
    <property type="entry name" value="Ribonuclease Z/Hydroxyacylglutathione hydrolase-like"/>
    <property type="match status" value="1"/>
</dbReference>
<dbReference type="HAMAP" id="MF_00457">
    <property type="entry name" value="UPF0173"/>
    <property type="match status" value="1"/>
</dbReference>
<dbReference type="InterPro" id="IPR001279">
    <property type="entry name" value="Metallo-B-lactamas"/>
</dbReference>
<dbReference type="InterPro" id="IPR036866">
    <property type="entry name" value="RibonucZ/Hydroxyglut_hydro"/>
</dbReference>
<dbReference type="InterPro" id="IPR022877">
    <property type="entry name" value="UPF0173"/>
</dbReference>
<dbReference type="InterPro" id="IPR050114">
    <property type="entry name" value="UPF0173_UPF0282_UlaG_hydrolase"/>
</dbReference>
<dbReference type="NCBIfam" id="NF001911">
    <property type="entry name" value="PRK00685.1"/>
    <property type="match status" value="1"/>
</dbReference>
<dbReference type="PANTHER" id="PTHR43546:SF3">
    <property type="entry name" value="UPF0173 METAL-DEPENDENT HYDROLASE MJ1163"/>
    <property type="match status" value="1"/>
</dbReference>
<dbReference type="PANTHER" id="PTHR43546">
    <property type="entry name" value="UPF0173 METAL-DEPENDENT HYDROLASE MJ1163-RELATED"/>
    <property type="match status" value="1"/>
</dbReference>
<dbReference type="Pfam" id="PF13483">
    <property type="entry name" value="Lactamase_B_3"/>
    <property type="match status" value="1"/>
</dbReference>
<dbReference type="SMART" id="SM00849">
    <property type="entry name" value="Lactamase_B"/>
    <property type="match status" value="1"/>
</dbReference>
<dbReference type="SUPFAM" id="SSF56281">
    <property type="entry name" value="Metallo-hydrolase/oxidoreductase"/>
    <property type="match status" value="1"/>
</dbReference>
<name>Y764_THEAC</name>
<evidence type="ECO:0000255" key="1">
    <source>
        <dbReference type="HAMAP-Rule" id="MF_00457"/>
    </source>
</evidence>
<evidence type="ECO:0000305" key="2"/>
<gene>
    <name type="ordered locus">Ta0764</name>
</gene>
<proteinExistence type="inferred from homology"/>
<accession>Q9HK42</accession>
<organism>
    <name type="scientific">Thermoplasma acidophilum (strain ATCC 25905 / DSM 1728 / JCM 9062 / NBRC 15155 / AMRC-C165)</name>
    <dbReference type="NCBI Taxonomy" id="273075"/>
    <lineage>
        <taxon>Archaea</taxon>
        <taxon>Methanobacteriati</taxon>
        <taxon>Thermoplasmatota</taxon>
        <taxon>Thermoplasmata</taxon>
        <taxon>Thermoplasmatales</taxon>
        <taxon>Thermoplasmataceae</taxon>
        <taxon>Thermoplasma</taxon>
    </lineage>
</organism>
<comment type="similarity">
    <text evidence="1">Belongs to the UPF0173 family.</text>
</comment>
<comment type="sequence caution" evidence="2">
    <conflict type="erroneous initiation">
        <sequence resource="EMBL-CDS" id="CAC11897"/>
    </conflict>
</comment>
<feature type="chain" id="PRO_0000156407" description="UPF0173 metal-dependent hydrolase Ta0764">
    <location>
        <begin position="1"/>
        <end position="224"/>
    </location>
</feature>
<reference key="1">
    <citation type="journal article" date="2000" name="Nature">
        <title>The genome sequence of the thermoacidophilic scavenger Thermoplasma acidophilum.</title>
        <authorList>
            <person name="Ruepp A."/>
            <person name="Graml W."/>
            <person name="Santos-Martinez M.-L."/>
            <person name="Koretke K.K."/>
            <person name="Volker C."/>
            <person name="Mewes H.-W."/>
            <person name="Frishman D."/>
            <person name="Stocker S."/>
            <person name="Lupas A.N."/>
            <person name="Baumeister W."/>
        </authorList>
    </citation>
    <scope>NUCLEOTIDE SEQUENCE [LARGE SCALE GENOMIC DNA]</scope>
    <source>
        <strain>ATCC 25905 / DSM 1728 / JCM 9062 / NBRC 15155 / AMRC-C165</strain>
    </source>
</reference>
<keyword id="KW-0378">Hydrolase</keyword>
<keyword id="KW-1185">Reference proteome</keyword>